<organism>
    <name type="scientific">Campylobacter jejuni subsp. jejuni serotype O:23/36 (strain 81-176)</name>
    <dbReference type="NCBI Taxonomy" id="354242"/>
    <lineage>
        <taxon>Bacteria</taxon>
        <taxon>Pseudomonadati</taxon>
        <taxon>Campylobacterota</taxon>
        <taxon>Epsilonproteobacteria</taxon>
        <taxon>Campylobacterales</taxon>
        <taxon>Campylobacteraceae</taxon>
        <taxon>Campylobacter</taxon>
    </lineage>
</organism>
<accession>A1W0H2</accession>
<gene>
    <name evidence="1" type="primary">mnmG</name>
    <name evidence="1" type="synonym">gidA</name>
    <name type="ordered locus">CJJ81176_1203</name>
</gene>
<reference key="1">
    <citation type="submission" date="2006-12" db="EMBL/GenBank/DDBJ databases">
        <authorList>
            <person name="Fouts D.E."/>
            <person name="Nelson K.E."/>
            <person name="Sebastian Y."/>
        </authorList>
    </citation>
    <scope>NUCLEOTIDE SEQUENCE [LARGE SCALE GENOMIC DNA]</scope>
    <source>
        <strain>81-176</strain>
    </source>
</reference>
<proteinExistence type="inferred from homology"/>
<sequence>MFDVIVIGGGHAGVEASAAAARMGKKTLLLTTLIEQIGAASCNPAIGGLAKGHLVKELDAMGGLMGEITDEAGIQFRILNESKGVAVQGSRAQIDMDKYRIIARNKLLKLPNLEISQEQASVLIVENDEVKGVKTNLENIYFAKKVILTTGTFLNGLIHVGENKLQAGRVGELASVNLGNYLQTLGLKMGRLKTGTCPRVDAKSIDFSVLEIQDGDVNPKAFSFRSRNFNPTQLPCYIARTNTTTHEIIKNNFYRAPLFTGQIEGVGPRYCPSIEDKINRFSDKESHHLFIEPQTIDATEYYINGFSTSLPYEVQTQMLRSVEGFENAKITRFGYAIEYDYIEPTELKHTLELKKIKNLYCAGQINGTTGYEEAAAQGFMAGINASLSIDMKEPLILRRDEAYIGVLIDDLVVKGTKEPYRMFTSRAEFRLLLREENAILRLGKYGYDLGLLSEQDFTYIQNIANNLQKGLEFLLSKEFTPNNQNNAFLESLGEDKISSIVNLQKIVARASFDIEKLKKLDPIFETMDHYSLREILNEAKYYHYISMQKAQVEKMKNLSELKIPENFDFKSVSGLSNEVVEKLNHHKPPTIFAASQISGITPAALDILQIYIKMQKKKA</sequence>
<evidence type="ECO:0000255" key="1">
    <source>
        <dbReference type="HAMAP-Rule" id="MF_00129"/>
    </source>
</evidence>
<dbReference type="EMBL" id="CP000538">
    <property type="protein sequence ID" value="EAQ72269.1"/>
    <property type="molecule type" value="Genomic_DNA"/>
</dbReference>
<dbReference type="RefSeq" id="WP_002864546.1">
    <property type="nucleotide sequence ID" value="NC_008787.1"/>
</dbReference>
<dbReference type="SMR" id="A1W0H2"/>
<dbReference type="KEGG" id="cjj:CJJ81176_1203"/>
<dbReference type="eggNOG" id="COG0445">
    <property type="taxonomic scope" value="Bacteria"/>
</dbReference>
<dbReference type="HOGENOM" id="CLU_007831_2_2_7"/>
<dbReference type="Proteomes" id="UP000000646">
    <property type="component" value="Chromosome"/>
</dbReference>
<dbReference type="GO" id="GO:0005829">
    <property type="term" value="C:cytosol"/>
    <property type="evidence" value="ECO:0007669"/>
    <property type="project" value="TreeGrafter"/>
</dbReference>
<dbReference type="GO" id="GO:0050660">
    <property type="term" value="F:flavin adenine dinucleotide binding"/>
    <property type="evidence" value="ECO:0007669"/>
    <property type="project" value="UniProtKB-UniRule"/>
</dbReference>
<dbReference type="GO" id="GO:0030488">
    <property type="term" value="P:tRNA methylation"/>
    <property type="evidence" value="ECO:0007669"/>
    <property type="project" value="TreeGrafter"/>
</dbReference>
<dbReference type="GO" id="GO:0002098">
    <property type="term" value="P:tRNA wobble uridine modification"/>
    <property type="evidence" value="ECO:0007669"/>
    <property type="project" value="InterPro"/>
</dbReference>
<dbReference type="FunFam" id="1.10.150.570:FF:000001">
    <property type="entry name" value="tRNA uridine 5-carboxymethylaminomethyl modification enzyme MnmG"/>
    <property type="match status" value="1"/>
</dbReference>
<dbReference type="FunFam" id="3.50.50.60:FF:000002">
    <property type="entry name" value="tRNA uridine 5-carboxymethylaminomethyl modification enzyme MnmG"/>
    <property type="match status" value="1"/>
</dbReference>
<dbReference type="Gene3D" id="3.50.50.60">
    <property type="entry name" value="FAD/NAD(P)-binding domain"/>
    <property type="match status" value="2"/>
</dbReference>
<dbReference type="Gene3D" id="1.10.150.570">
    <property type="entry name" value="GidA associated domain, C-terminal subdomain"/>
    <property type="match status" value="1"/>
</dbReference>
<dbReference type="Gene3D" id="1.10.10.1800">
    <property type="entry name" value="tRNA uridine 5-carboxymethylaminomethyl modification enzyme MnmG/GidA"/>
    <property type="match status" value="1"/>
</dbReference>
<dbReference type="HAMAP" id="MF_00129">
    <property type="entry name" value="MnmG_GidA"/>
    <property type="match status" value="1"/>
</dbReference>
<dbReference type="InterPro" id="IPR036188">
    <property type="entry name" value="FAD/NAD-bd_sf"/>
</dbReference>
<dbReference type="InterPro" id="IPR049312">
    <property type="entry name" value="GIDA_C_N"/>
</dbReference>
<dbReference type="InterPro" id="IPR004416">
    <property type="entry name" value="MnmG"/>
</dbReference>
<dbReference type="InterPro" id="IPR002218">
    <property type="entry name" value="MnmG-rel"/>
</dbReference>
<dbReference type="InterPro" id="IPR020595">
    <property type="entry name" value="MnmG-rel_CS"/>
</dbReference>
<dbReference type="InterPro" id="IPR026904">
    <property type="entry name" value="MnmG_C"/>
</dbReference>
<dbReference type="InterPro" id="IPR047001">
    <property type="entry name" value="MnmG_C_subdom"/>
</dbReference>
<dbReference type="InterPro" id="IPR044920">
    <property type="entry name" value="MnmG_C_subdom_sf"/>
</dbReference>
<dbReference type="InterPro" id="IPR040131">
    <property type="entry name" value="MnmG_N"/>
</dbReference>
<dbReference type="NCBIfam" id="TIGR00136">
    <property type="entry name" value="mnmG_gidA"/>
    <property type="match status" value="1"/>
</dbReference>
<dbReference type="PANTHER" id="PTHR11806">
    <property type="entry name" value="GLUCOSE INHIBITED DIVISION PROTEIN A"/>
    <property type="match status" value="1"/>
</dbReference>
<dbReference type="PANTHER" id="PTHR11806:SF0">
    <property type="entry name" value="PROTEIN MTO1 HOMOLOG, MITOCHONDRIAL"/>
    <property type="match status" value="1"/>
</dbReference>
<dbReference type="Pfam" id="PF01134">
    <property type="entry name" value="GIDA"/>
    <property type="match status" value="1"/>
</dbReference>
<dbReference type="Pfam" id="PF21680">
    <property type="entry name" value="GIDA_C_1st"/>
    <property type="match status" value="1"/>
</dbReference>
<dbReference type="Pfam" id="PF13932">
    <property type="entry name" value="SAM_GIDA_C"/>
    <property type="match status" value="1"/>
</dbReference>
<dbReference type="SMART" id="SM01228">
    <property type="entry name" value="GIDA_assoc_3"/>
    <property type="match status" value="1"/>
</dbReference>
<dbReference type="SUPFAM" id="SSF51905">
    <property type="entry name" value="FAD/NAD(P)-binding domain"/>
    <property type="match status" value="1"/>
</dbReference>
<dbReference type="PROSITE" id="PS01280">
    <property type="entry name" value="GIDA_1"/>
    <property type="match status" value="1"/>
</dbReference>
<dbReference type="PROSITE" id="PS01281">
    <property type="entry name" value="GIDA_2"/>
    <property type="match status" value="1"/>
</dbReference>
<keyword id="KW-0963">Cytoplasm</keyword>
<keyword id="KW-0274">FAD</keyword>
<keyword id="KW-0285">Flavoprotein</keyword>
<keyword id="KW-0520">NAD</keyword>
<keyword id="KW-0819">tRNA processing</keyword>
<name>MNMG_CAMJJ</name>
<feature type="chain" id="PRO_1000016575" description="tRNA uridine 5-carboxymethylaminomethyl modification enzyme MnmG">
    <location>
        <begin position="1"/>
        <end position="619"/>
    </location>
</feature>
<feature type="binding site" evidence="1">
    <location>
        <begin position="8"/>
        <end position="13"/>
    </location>
    <ligand>
        <name>FAD</name>
        <dbReference type="ChEBI" id="CHEBI:57692"/>
    </ligand>
</feature>
<feature type="binding site" evidence="1">
    <location>
        <begin position="267"/>
        <end position="281"/>
    </location>
    <ligand>
        <name>NAD(+)</name>
        <dbReference type="ChEBI" id="CHEBI:57540"/>
    </ligand>
</feature>
<protein>
    <recommendedName>
        <fullName evidence="1">tRNA uridine 5-carboxymethylaminomethyl modification enzyme MnmG</fullName>
    </recommendedName>
    <alternativeName>
        <fullName evidence="1">Glucose-inhibited division protein A</fullName>
    </alternativeName>
</protein>
<comment type="function">
    <text evidence="1">NAD-binding protein involved in the addition of a carboxymethylaminomethyl (cmnm) group at the wobble position (U34) of certain tRNAs, forming tRNA-cmnm(5)s(2)U34.</text>
</comment>
<comment type="cofactor">
    <cofactor evidence="1">
        <name>FAD</name>
        <dbReference type="ChEBI" id="CHEBI:57692"/>
    </cofactor>
</comment>
<comment type="subunit">
    <text evidence="1">Homodimer. Heterotetramer of two MnmE and two MnmG subunits.</text>
</comment>
<comment type="subcellular location">
    <subcellularLocation>
        <location evidence="1">Cytoplasm</location>
    </subcellularLocation>
</comment>
<comment type="similarity">
    <text evidence="1">Belongs to the MnmG family.</text>
</comment>